<reference key="1">
    <citation type="journal article" date="2009" name="J. Bacteriol.">
        <title>Complete genome sequence of Rhodobacter sphaeroides KD131.</title>
        <authorList>
            <person name="Lim S.-K."/>
            <person name="Kim S.J."/>
            <person name="Cha S.H."/>
            <person name="Oh Y.-K."/>
            <person name="Rhee H.-J."/>
            <person name="Kim M.-S."/>
            <person name="Lee J.K."/>
        </authorList>
    </citation>
    <scope>NUCLEOTIDE SEQUENCE [LARGE SCALE GENOMIC DNA]</scope>
    <source>
        <strain>KD131 / KCTC 12085</strain>
    </source>
</reference>
<keyword id="KW-0067">ATP-binding</keyword>
<keyword id="KW-0460">Magnesium</keyword>
<keyword id="KW-0547">Nucleotide-binding</keyword>
<keyword id="KW-0808">Transferase</keyword>
<keyword id="KW-0819">tRNA processing</keyword>
<comment type="function">
    <text evidence="1">Catalyzes the transfer of a dimethylallyl group onto the adenine at position 37 in tRNAs that read codons beginning with uridine, leading to the formation of N6-(dimethylallyl)adenosine (i(6)A).</text>
</comment>
<comment type="catalytic activity">
    <reaction evidence="1">
        <text>adenosine(37) in tRNA + dimethylallyl diphosphate = N(6)-dimethylallyladenosine(37) in tRNA + diphosphate</text>
        <dbReference type="Rhea" id="RHEA:26482"/>
        <dbReference type="Rhea" id="RHEA-COMP:10162"/>
        <dbReference type="Rhea" id="RHEA-COMP:10375"/>
        <dbReference type="ChEBI" id="CHEBI:33019"/>
        <dbReference type="ChEBI" id="CHEBI:57623"/>
        <dbReference type="ChEBI" id="CHEBI:74411"/>
        <dbReference type="ChEBI" id="CHEBI:74415"/>
        <dbReference type="EC" id="2.5.1.75"/>
    </reaction>
</comment>
<comment type="cofactor">
    <cofactor evidence="1">
        <name>Mg(2+)</name>
        <dbReference type="ChEBI" id="CHEBI:18420"/>
    </cofactor>
</comment>
<comment type="subunit">
    <text evidence="1">Monomer.</text>
</comment>
<comment type="similarity">
    <text evidence="1">Belongs to the IPP transferase family.</text>
</comment>
<comment type="sequence caution" evidence="2">
    <conflict type="erroneous initiation">
        <sequence resource="EMBL-CDS" id="ACM00880"/>
    </conflict>
</comment>
<sequence length="314" mass="33976">MAEDAQGRPAPTSPFFVTIPSKLLPQLPDIPSDRPVLIAGPTASGKSALAVRLVEDGGGVVVNADALQVYDCWRILSARPSAAEEAALPHRLYGHVGARQTYSAGHWLKEVAAVLAEGLRPVIVGGTGLYFSALTEGLAEIPHTPPEVRAEADARLAEAGLARMVAELDAETAARIDLQNPARVQRAWEVLRATGRGLARWQAETAPPLLPLSDATALVIRPDPTWLAQRIDSRFNLMMADGALEEVRAALPGWDPTLPSARAIGAPELVAHLRGEIPLDEAVAAAKLASRQYAKRQRTWFRNRMRLWHEIRLP</sequence>
<evidence type="ECO:0000255" key="1">
    <source>
        <dbReference type="HAMAP-Rule" id="MF_00185"/>
    </source>
</evidence>
<evidence type="ECO:0000305" key="2"/>
<proteinExistence type="inferred from homology"/>
<accession>B9KRT8</accession>
<gene>
    <name evidence="1" type="primary">miaA</name>
    <name type="ordered locus">RSKD131_1020</name>
</gene>
<dbReference type="EC" id="2.5.1.75" evidence="1"/>
<dbReference type="EMBL" id="CP001150">
    <property type="protein sequence ID" value="ACM00880.1"/>
    <property type="status" value="ALT_INIT"/>
    <property type="molecule type" value="Genomic_DNA"/>
</dbReference>
<dbReference type="RefSeq" id="WP_174893315.1">
    <property type="nucleotide sequence ID" value="NC_011963.1"/>
</dbReference>
<dbReference type="SMR" id="B9KRT8"/>
<dbReference type="GeneID" id="67446453"/>
<dbReference type="KEGG" id="rsk:RSKD131_1020"/>
<dbReference type="HOGENOM" id="CLU_032616_0_1_5"/>
<dbReference type="GO" id="GO:0005524">
    <property type="term" value="F:ATP binding"/>
    <property type="evidence" value="ECO:0007669"/>
    <property type="project" value="UniProtKB-UniRule"/>
</dbReference>
<dbReference type="GO" id="GO:0052381">
    <property type="term" value="F:tRNA dimethylallyltransferase activity"/>
    <property type="evidence" value="ECO:0007669"/>
    <property type="project" value="UniProtKB-UniRule"/>
</dbReference>
<dbReference type="GO" id="GO:0006400">
    <property type="term" value="P:tRNA modification"/>
    <property type="evidence" value="ECO:0007669"/>
    <property type="project" value="TreeGrafter"/>
</dbReference>
<dbReference type="Gene3D" id="1.10.20.140">
    <property type="match status" value="1"/>
</dbReference>
<dbReference type="Gene3D" id="3.40.50.300">
    <property type="entry name" value="P-loop containing nucleotide triphosphate hydrolases"/>
    <property type="match status" value="1"/>
</dbReference>
<dbReference type="HAMAP" id="MF_00185">
    <property type="entry name" value="IPP_trans"/>
    <property type="match status" value="1"/>
</dbReference>
<dbReference type="InterPro" id="IPR039657">
    <property type="entry name" value="Dimethylallyltransferase"/>
</dbReference>
<dbReference type="InterPro" id="IPR018022">
    <property type="entry name" value="IPT"/>
</dbReference>
<dbReference type="InterPro" id="IPR027417">
    <property type="entry name" value="P-loop_NTPase"/>
</dbReference>
<dbReference type="NCBIfam" id="TIGR00174">
    <property type="entry name" value="miaA"/>
    <property type="match status" value="1"/>
</dbReference>
<dbReference type="PANTHER" id="PTHR11088">
    <property type="entry name" value="TRNA DIMETHYLALLYLTRANSFERASE"/>
    <property type="match status" value="1"/>
</dbReference>
<dbReference type="PANTHER" id="PTHR11088:SF60">
    <property type="entry name" value="TRNA DIMETHYLALLYLTRANSFERASE"/>
    <property type="match status" value="1"/>
</dbReference>
<dbReference type="Pfam" id="PF01715">
    <property type="entry name" value="IPPT"/>
    <property type="match status" value="1"/>
</dbReference>
<dbReference type="SUPFAM" id="SSF52540">
    <property type="entry name" value="P-loop containing nucleoside triphosphate hydrolases"/>
    <property type="match status" value="1"/>
</dbReference>
<feature type="chain" id="PRO_0000377285" description="tRNA dimethylallyltransferase">
    <location>
        <begin position="1"/>
        <end position="314"/>
    </location>
</feature>
<feature type="binding site" evidence="1">
    <location>
        <begin position="40"/>
        <end position="47"/>
    </location>
    <ligand>
        <name>ATP</name>
        <dbReference type="ChEBI" id="CHEBI:30616"/>
    </ligand>
</feature>
<feature type="binding site" evidence="1">
    <location>
        <begin position="42"/>
        <end position="47"/>
    </location>
    <ligand>
        <name>substrate</name>
    </ligand>
</feature>
<feature type="site" description="Interaction with substrate tRNA" evidence="1">
    <location>
        <position position="127"/>
    </location>
</feature>
<feature type="site" description="Interaction with substrate tRNA" evidence="1">
    <location>
        <position position="149"/>
    </location>
</feature>
<organism>
    <name type="scientific">Cereibacter sphaeroides (strain KD131 / KCTC 12085)</name>
    <name type="common">Rhodobacter sphaeroides</name>
    <dbReference type="NCBI Taxonomy" id="557760"/>
    <lineage>
        <taxon>Bacteria</taxon>
        <taxon>Pseudomonadati</taxon>
        <taxon>Pseudomonadota</taxon>
        <taxon>Alphaproteobacteria</taxon>
        <taxon>Rhodobacterales</taxon>
        <taxon>Paracoccaceae</taxon>
        <taxon>Cereibacter</taxon>
    </lineage>
</organism>
<protein>
    <recommendedName>
        <fullName evidence="1">tRNA dimethylallyltransferase</fullName>
        <ecNumber evidence="1">2.5.1.75</ecNumber>
    </recommendedName>
    <alternativeName>
        <fullName evidence="1">Dimethylallyl diphosphate:tRNA dimethylallyltransferase</fullName>
        <shortName evidence="1">DMAPP:tRNA dimethylallyltransferase</shortName>
        <shortName evidence="1">DMATase</shortName>
    </alternativeName>
    <alternativeName>
        <fullName evidence="1">Isopentenyl-diphosphate:tRNA isopentenyltransferase</fullName>
        <shortName evidence="1">IPP transferase</shortName>
        <shortName evidence="1">IPPT</shortName>
        <shortName evidence="1">IPTase</shortName>
    </alternativeName>
</protein>
<name>MIAA_CERSK</name>